<comment type="function">
    <text evidence="1">DNA-dependent RNA polymerase catalyzes the transcription of DNA into RNA using the four ribonucleoside triphosphates as substrates.</text>
</comment>
<comment type="catalytic activity">
    <reaction evidence="1">
        <text>RNA(n) + a ribonucleoside 5'-triphosphate = RNA(n+1) + diphosphate</text>
        <dbReference type="Rhea" id="RHEA:21248"/>
        <dbReference type="Rhea" id="RHEA-COMP:14527"/>
        <dbReference type="Rhea" id="RHEA-COMP:17342"/>
        <dbReference type="ChEBI" id="CHEBI:33019"/>
        <dbReference type="ChEBI" id="CHEBI:61557"/>
        <dbReference type="ChEBI" id="CHEBI:140395"/>
        <dbReference type="EC" id="2.7.7.6"/>
    </reaction>
</comment>
<comment type="cofactor">
    <cofactor evidence="1">
        <name>Mg(2+)</name>
        <dbReference type="ChEBI" id="CHEBI:18420"/>
    </cofactor>
    <text evidence="1">Binds 1 Mg(2+) ion per subunit.</text>
</comment>
<comment type="cofactor">
    <cofactor evidence="1">
        <name>Zn(2+)</name>
        <dbReference type="ChEBI" id="CHEBI:29105"/>
    </cofactor>
    <text evidence="1">Binds 2 Zn(2+) ions per subunit.</text>
</comment>
<comment type="subunit">
    <text evidence="1">The RNAP catalytic core consists of 2 alpha, 1 beta, 1 beta' and 1 omega subunit. When a sigma factor is associated with the core the holoenzyme is formed, which can initiate transcription.</text>
</comment>
<comment type="similarity">
    <text evidence="1">Belongs to the RNA polymerase beta' chain family.</text>
</comment>
<accession>A5EX69</accession>
<dbReference type="EC" id="2.7.7.6" evidence="1"/>
<dbReference type="EMBL" id="CP000513">
    <property type="protein sequence ID" value="ABQ13566.1"/>
    <property type="molecule type" value="Genomic_DNA"/>
</dbReference>
<dbReference type="RefSeq" id="WP_012031576.1">
    <property type="nucleotide sequence ID" value="NC_009446.1"/>
</dbReference>
<dbReference type="SMR" id="A5EX69"/>
<dbReference type="STRING" id="246195.DNO_1281"/>
<dbReference type="KEGG" id="dno:DNO_1281"/>
<dbReference type="eggNOG" id="COG0086">
    <property type="taxonomic scope" value="Bacteria"/>
</dbReference>
<dbReference type="HOGENOM" id="CLU_000524_3_1_6"/>
<dbReference type="OrthoDB" id="9815296at2"/>
<dbReference type="Proteomes" id="UP000000248">
    <property type="component" value="Chromosome"/>
</dbReference>
<dbReference type="GO" id="GO:0000428">
    <property type="term" value="C:DNA-directed RNA polymerase complex"/>
    <property type="evidence" value="ECO:0007669"/>
    <property type="project" value="UniProtKB-KW"/>
</dbReference>
<dbReference type="GO" id="GO:0003677">
    <property type="term" value="F:DNA binding"/>
    <property type="evidence" value="ECO:0007669"/>
    <property type="project" value="UniProtKB-UniRule"/>
</dbReference>
<dbReference type="GO" id="GO:0003899">
    <property type="term" value="F:DNA-directed RNA polymerase activity"/>
    <property type="evidence" value="ECO:0007669"/>
    <property type="project" value="UniProtKB-UniRule"/>
</dbReference>
<dbReference type="GO" id="GO:0000287">
    <property type="term" value="F:magnesium ion binding"/>
    <property type="evidence" value="ECO:0007669"/>
    <property type="project" value="UniProtKB-UniRule"/>
</dbReference>
<dbReference type="GO" id="GO:0008270">
    <property type="term" value="F:zinc ion binding"/>
    <property type="evidence" value="ECO:0007669"/>
    <property type="project" value="UniProtKB-UniRule"/>
</dbReference>
<dbReference type="GO" id="GO:0006351">
    <property type="term" value="P:DNA-templated transcription"/>
    <property type="evidence" value="ECO:0007669"/>
    <property type="project" value="UniProtKB-UniRule"/>
</dbReference>
<dbReference type="CDD" id="cd02655">
    <property type="entry name" value="RNAP_beta'_C"/>
    <property type="match status" value="1"/>
</dbReference>
<dbReference type="CDD" id="cd01609">
    <property type="entry name" value="RNAP_beta'_N"/>
    <property type="match status" value="1"/>
</dbReference>
<dbReference type="FunFam" id="1.10.132.30:FF:000003">
    <property type="entry name" value="DNA-directed RNA polymerase subunit beta"/>
    <property type="match status" value="1"/>
</dbReference>
<dbReference type="FunFam" id="1.10.150.390:FF:000002">
    <property type="entry name" value="DNA-directed RNA polymerase subunit beta"/>
    <property type="match status" value="1"/>
</dbReference>
<dbReference type="FunFam" id="4.10.860.120:FF:000001">
    <property type="entry name" value="DNA-directed RNA polymerase subunit beta"/>
    <property type="match status" value="1"/>
</dbReference>
<dbReference type="Gene3D" id="1.10.132.30">
    <property type="match status" value="1"/>
</dbReference>
<dbReference type="Gene3D" id="1.10.150.390">
    <property type="match status" value="1"/>
</dbReference>
<dbReference type="Gene3D" id="1.10.1790.20">
    <property type="match status" value="1"/>
</dbReference>
<dbReference type="Gene3D" id="1.10.40.90">
    <property type="match status" value="1"/>
</dbReference>
<dbReference type="Gene3D" id="2.40.40.20">
    <property type="match status" value="1"/>
</dbReference>
<dbReference type="Gene3D" id="2.40.50.100">
    <property type="match status" value="3"/>
</dbReference>
<dbReference type="Gene3D" id="4.10.860.120">
    <property type="entry name" value="RNA polymerase II, clamp domain"/>
    <property type="match status" value="1"/>
</dbReference>
<dbReference type="Gene3D" id="1.10.274.100">
    <property type="entry name" value="RNA polymerase Rpb1, domain 3"/>
    <property type="match status" value="2"/>
</dbReference>
<dbReference type="HAMAP" id="MF_01322">
    <property type="entry name" value="RNApol_bact_RpoC"/>
    <property type="match status" value="1"/>
</dbReference>
<dbReference type="InterPro" id="IPR045867">
    <property type="entry name" value="DNA-dir_RpoC_beta_prime"/>
</dbReference>
<dbReference type="InterPro" id="IPR012754">
    <property type="entry name" value="DNA-dir_RpoC_beta_prime_bact"/>
</dbReference>
<dbReference type="InterPro" id="IPR000722">
    <property type="entry name" value="RNA_pol_asu"/>
</dbReference>
<dbReference type="InterPro" id="IPR006592">
    <property type="entry name" value="RNA_pol_N"/>
</dbReference>
<dbReference type="InterPro" id="IPR007080">
    <property type="entry name" value="RNA_pol_Rpb1_1"/>
</dbReference>
<dbReference type="InterPro" id="IPR007066">
    <property type="entry name" value="RNA_pol_Rpb1_3"/>
</dbReference>
<dbReference type="InterPro" id="IPR042102">
    <property type="entry name" value="RNA_pol_Rpb1_3_sf"/>
</dbReference>
<dbReference type="InterPro" id="IPR007083">
    <property type="entry name" value="RNA_pol_Rpb1_4"/>
</dbReference>
<dbReference type="InterPro" id="IPR007081">
    <property type="entry name" value="RNA_pol_Rpb1_5"/>
</dbReference>
<dbReference type="InterPro" id="IPR044893">
    <property type="entry name" value="RNA_pol_Rpb1_clamp_domain"/>
</dbReference>
<dbReference type="InterPro" id="IPR038120">
    <property type="entry name" value="Rpb1_funnel_sf"/>
</dbReference>
<dbReference type="NCBIfam" id="TIGR02386">
    <property type="entry name" value="rpoC_TIGR"/>
    <property type="match status" value="1"/>
</dbReference>
<dbReference type="PANTHER" id="PTHR19376">
    <property type="entry name" value="DNA-DIRECTED RNA POLYMERASE"/>
    <property type="match status" value="1"/>
</dbReference>
<dbReference type="PANTHER" id="PTHR19376:SF54">
    <property type="entry name" value="DNA-DIRECTED RNA POLYMERASE SUBUNIT BETA"/>
    <property type="match status" value="1"/>
</dbReference>
<dbReference type="Pfam" id="PF04997">
    <property type="entry name" value="RNA_pol_Rpb1_1"/>
    <property type="match status" value="1"/>
</dbReference>
<dbReference type="Pfam" id="PF00623">
    <property type="entry name" value="RNA_pol_Rpb1_2"/>
    <property type="match status" value="2"/>
</dbReference>
<dbReference type="Pfam" id="PF04983">
    <property type="entry name" value="RNA_pol_Rpb1_3"/>
    <property type="match status" value="1"/>
</dbReference>
<dbReference type="Pfam" id="PF05000">
    <property type="entry name" value="RNA_pol_Rpb1_4"/>
    <property type="match status" value="1"/>
</dbReference>
<dbReference type="Pfam" id="PF04998">
    <property type="entry name" value="RNA_pol_Rpb1_5"/>
    <property type="match status" value="1"/>
</dbReference>
<dbReference type="SMART" id="SM00663">
    <property type="entry name" value="RPOLA_N"/>
    <property type="match status" value="1"/>
</dbReference>
<dbReference type="SUPFAM" id="SSF64484">
    <property type="entry name" value="beta and beta-prime subunits of DNA dependent RNA-polymerase"/>
    <property type="match status" value="1"/>
</dbReference>
<organism>
    <name type="scientific">Dichelobacter nodosus (strain VCS1703A)</name>
    <dbReference type="NCBI Taxonomy" id="246195"/>
    <lineage>
        <taxon>Bacteria</taxon>
        <taxon>Pseudomonadati</taxon>
        <taxon>Pseudomonadota</taxon>
        <taxon>Gammaproteobacteria</taxon>
        <taxon>Cardiobacteriales</taxon>
        <taxon>Cardiobacteriaceae</taxon>
        <taxon>Dichelobacter</taxon>
    </lineage>
</organism>
<sequence>MKELIEMYKPHNIAEDFDKIHIGLASPDVIRSWSYGEVKKPETINYRTFKPERDGLFCAKIFGPIKDYECLCGKYKRLKHRGVVCERCGVEVTKSSVRRERMGHIELATPVAHIWFLKSLPSRIGLLLDLTLREIERVLYFESFIVIDPGMTPLEKHQLLNEDAYKEAVDMYGHEFKAMMGAEAIQYILKNMNLENEIQDIHEQLNATHSETKIKRLLKRLKLMTSLLDSGNKPEWMILEVLPVLPPDLRPLVPLDSGRFATSDLNDLYRRVINRNNRLKRLLELYAPDIIVRNEKRMLQEAVDSLLDNGRRGRTVTGTNKRPLKSLADMIKGKQGRFRQNLLGKRVDYSGRSVIVVGPTLRLHQCGLPKRMALELFKPFIFHYLITNEFASTIKAAKLMVERDEPAVWDALEFVIRQHPVMLNRAPTLHRLGIQAFEPILIEGKAIQLHPLACAAFNADFDGDQMAVHVPLSLEAQLEARTLMMSSNNILSPANGEPIIVPSQDMVLGLYYMTRERINAKGEGMRFTDVKEVERAYQNGLVDLQAIIEVRLPHYEENGTGEGTLVRTKTTVGRALLSQILPKGLSFSYIDKPMKKKAISALINQCYRQLGLKDTVILADQLMYTGYHYATRSGSSIGVSDMVVPDAKAEILARSEAEVKEIEHQYASGLLTSGEKYNKVIDIWSRTGDQVARKMMEQLGKVRLQNRQGEWVEQDSFNSVYMMADSGARGSAAQIRQLAGMRGLMAKPDGSIIETPITANFREGLNVLQYFISTHGARKGLADTALKTANSGYLTRRLVDVAQDVVITEDDCGTTEGIEIQAVVEGGDVVVSLADRVLGRVLSEPVIDGNTGEVALAAGTLLEEPQIAILEKAGVDRVFVRSVITCATRHGVCAKCYGRDLARGHLVTAGEAVGVIAAQSIGEPGTQLTMRTFHIGGAAQSAASIGSVEVKTNGVARLSNMKTVVNKDGKLVSISRSGELSIIDMYGHERERYKLPYGATLNIANGEEVKQGQILATWDPHTHPVIAEVAGKASFFDFEDGVTVQTSSDADTGLAVLTILDNAQRPTSAKDKRPLIQLLDENGNPVTSAGSEIPVNYFLPAGAVVNLNDGDDIHIGDVLARIPQASGKLSDITGGLPRVADLFEARKPKEPAILAEITGTVSFGKETKGKQRLVINSDDGEVFEILIPKWRRLNVFEGEQVRKGEILADGEPSPHDILRLRGVHELNEHIVREIQTVYRLQGVKINDKHIEVIVRQMLRKVLILDAGESHFIAGEQAELTRVLQENDRLQAQNKLPIRYEPILMGITKASLATESFISAASFQETTRVLTEASVLGQVDDLFGLKENVIVGRLIPAGTGLAYHQHRRNMRDEDRFLNGSASSNEKSRSAGVLEATDEESAGD</sequence>
<gene>
    <name evidence="1" type="primary">rpoC</name>
    <name type="ordered locus">DNO_1281</name>
</gene>
<evidence type="ECO:0000255" key="1">
    <source>
        <dbReference type="HAMAP-Rule" id="MF_01322"/>
    </source>
</evidence>
<evidence type="ECO:0000256" key="2">
    <source>
        <dbReference type="SAM" id="MobiDB-lite"/>
    </source>
</evidence>
<name>RPOC_DICNV</name>
<keyword id="KW-0240">DNA-directed RNA polymerase</keyword>
<keyword id="KW-0460">Magnesium</keyword>
<keyword id="KW-0479">Metal-binding</keyword>
<keyword id="KW-0548">Nucleotidyltransferase</keyword>
<keyword id="KW-1185">Reference proteome</keyword>
<keyword id="KW-0804">Transcription</keyword>
<keyword id="KW-0808">Transferase</keyword>
<keyword id="KW-0862">Zinc</keyword>
<protein>
    <recommendedName>
        <fullName evidence="1">DNA-directed RNA polymerase subunit beta'</fullName>
        <shortName evidence="1">RNAP subunit beta'</shortName>
        <ecNumber evidence="1">2.7.7.6</ecNumber>
    </recommendedName>
    <alternativeName>
        <fullName evidence="1">RNA polymerase subunit beta'</fullName>
    </alternativeName>
    <alternativeName>
        <fullName evidence="1">Transcriptase subunit beta'</fullName>
    </alternativeName>
</protein>
<proteinExistence type="inferred from homology"/>
<feature type="chain" id="PRO_0000353348" description="DNA-directed RNA polymerase subunit beta'">
    <location>
        <begin position="1"/>
        <end position="1402"/>
    </location>
</feature>
<feature type="region of interest" description="Disordered" evidence="2">
    <location>
        <begin position="1373"/>
        <end position="1402"/>
    </location>
</feature>
<feature type="binding site" evidence="1">
    <location>
        <position position="70"/>
    </location>
    <ligand>
        <name>Zn(2+)</name>
        <dbReference type="ChEBI" id="CHEBI:29105"/>
        <label>1</label>
    </ligand>
</feature>
<feature type="binding site" evidence="1">
    <location>
        <position position="72"/>
    </location>
    <ligand>
        <name>Zn(2+)</name>
        <dbReference type="ChEBI" id="CHEBI:29105"/>
        <label>1</label>
    </ligand>
</feature>
<feature type="binding site" evidence="1">
    <location>
        <position position="85"/>
    </location>
    <ligand>
        <name>Zn(2+)</name>
        <dbReference type="ChEBI" id="CHEBI:29105"/>
        <label>1</label>
    </ligand>
</feature>
<feature type="binding site" evidence="1">
    <location>
        <position position="88"/>
    </location>
    <ligand>
        <name>Zn(2+)</name>
        <dbReference type="ChEBI" id="CHEBI:29105"/>
        <label>1</label>
    </ligand>
</feature>
<feature type="binding site" evidence="1">
    <location>
        <position position="460"/>
    </location>
    <ligand>
        <name>Mg(2+)</name>
        <dbReference type="ChEBI" id="CHEBI:18420"/>
    </ligand>
</feature>
<feature type="binding site" evidence="1">
    <location>
        <position position="462"/>
    </location>
    <ligand>
        <name>Mg(2+)</name>
        <dbReference type="ChEBI" id="CHEBI:18420"/>
    </ligand>
</feature>
<feature type="binding site" evidence="1">
    <location>
        <position position="464"/>
    </location>
    <ligand>
        <name>Mg(2+)</name>
        <dbReference type="ChEBI" id="CHEBI:18420"/>
    </ligand>
</feature>
<feature type="binding site" evidence="1">
    <location>
        <position position="812"/>
    </location>
    <ligand>
        <name>Zn(2+)</name>
        <dbReference type="ChEBI" id="CHEBI:29105"/>
        <label>2</label>
    </ligand>
</feature>
<feature type="binding site" evidence="1">
    <location>
        <position position="886"/>
    </location>
    <ligand>
        <name>Zn(2+)</name>
        <dbReference type="ChEBI" id="CHEBI:29105"/>
        <label>2</label>
    </ligand>
</feature>
<feature type="binding site" evidence="1">
    <location>
        <position position="893"/>
    </location>
    <ligand>
        <name>Zn(2+)</name>
        <dbReference type="ChEBI" id="CHEBI:29105"/>
        <label>2</label>
    </ligand>
</feature>
<feature type="binding site" evidence="1">
    <location>
        <position position="896"/>
    </location>
    <ligand>
        <name>Zn(2+)</name>
        <dbReference type="ChEBI" id="CHEBI:29105"/>
        <label>2</label>
    </ligand>
</feature>
<reference key="1">
    <citation type="journal article" date="2007" name="Nat. Biotechnol.">
        <title>Genome sequence and identification of candidate vaccine antigens from the animal pathogen Dichelobacter nodosus.</title>
        <authorList>
            <person name="Myers G.S.A."/>
            <person name="Parker D."/>
            <person name="Al-Hasani K."/>
            <person name="Kennan R.M."/>
            <person name="Seemann T."/>
            <person name="Ren Q."/>
            <person name="Badger J.H."/>
            <person name="Selengut J.D."/>
            <person name="Deboy R.T."/>
            <person name="Tettelin H."/>
            <person name="Boyce J.D."/>
            <person name="McCarl V.P."/>
            <person name="Han X."/>
            <person name="Nelson W.C."/>
            <person name="Madupu R."/>
            <person name="Mohamoud Y."/>
            <person name="Holley T."/>
            <person name="Fedorova N."/>
            <person name="Khouri H."/>
            <person name="Bottomley S.P."/>
            <person name="Whittington R.J."/>
            <person name="Adler B."/>
            <person name="Songer J.G."/>
            <person name="Rood J.I."/>
            <person name="Paulsen I.T."/>
        </authorList>
    </citation>
    <scope>NUCLEOTIDE SEQUENCE [LARGE SCALE GENOMIC DNA]</scope>
    <source>
        <strain>VCS1703A</strain>
    </source>
</reference>